<evidence type="ECO:0000250" key="1">
    <source>
        <dbReference type="UniProtKB" id="C4YMW2"/>
    </source>
</evidence>
<evidence type="ECO:0000250" key="2">
    <source>
        <dbReference type="UniProtKB" id="P43534"/>
    </source>
</evidence>
<evidence type="ECO:0000269" key="3">
    <source>
    </source>
</evidence>
<evidence type="ECO:0000303" key="4">
    <source>
    </source>
</evidence>
<evidence type="ECO:0000305" key="5"/>
<evidence type="ECO:0000305" key="6">
    <source>
    </source>
</evidence>
<evidence type="ECO:0000312" key="7">
    <source>
        <dbReference type="EMBL" id="AAU27647.1"/>
    </source>
</evidence>
<evidence type="ECO:0000312" key="8">
    <source>
        <dbReference type="Proteomes" id="UP000000609"/>
    </source>
</evidence>
<accession>Q5ZV75</accession>
<sequence length="316" mass="35276">MAMSSLKSRVTLLLNWYTNPYHTPILVAQQLGFYSEEDIKLAILEPADPSDVTEIVGLGTVDFGVKAMIHTVAAKAKGYPVTSIGTLLDEPPTGLIALKSSGINSFQDIVGKRVGYIGEFGKKIIDDLASLAGIDPTSYKTVRIGMNVTDAIYRDVIDTGIGFINFQKVELEHLCGETVFLRIDQLAGLGCCCFCSIQFIVPEITLQQPELVKGFLRATQRGAAYTTEKPEEAYELLCQAKPQLRTPLYQKIFTRTLPFFSRTLINVDRDWDKVGRYTKHLKIIDEHFDISQCYTNRFLPDTPYSDLKPIACCLEN</sequence>
<comment type="function">
    <text evidence="2 3 6">Responsible for the formation of the pyrimidine heterocycle in the thiamine biosynthesis pathway (PubMed:33034117). Catalyzes the formation of hydroxymethylpyrimidine phosphate (HMP-P) from histidine and pyridoxal phosphate (PLP) (Probable). The protein uses PLP and the active site histidine to form HMP-P, generating an inactive enzyme (By similarity). The enzyme can only undergo a single turnover, which suggests it is a suicide enzyme (By similarity).</text>
</comment>
<comment type="catalytic activity">
    <reaction evidence="3">
        <text>N(6)-(pyridoxal phosphate)-L-lysyl-[4-amino-5-hydroxymethyl-2-methylpyrimidine phosphate synthase] + L-histidyl-[4-amino-5-hydroxymethyl-2-methylpyrimidine phosphate synthase] + 2 Fe(3+) + 4 H2O = L-lysyl-[4-amino-5-hydroxymethyl-2-methylpyrimidine phosphate synthase] + (2S)-2-amino-5-hydroxy-4-oxopentanoyl-[4-amino-5-hydroxymethyl-2-methylpyrimidine phosphate synthase] + 4-amino-2-methyl-5-(phosphooxymethyl)pyrimidine + 3-oxopropanoate + 2 Fe(2+) + 2 H(+)</text>
        <dbReference type="Rhea" id="RHEA:65756"/>
        <dbReference type="Rhea" id="RHEA-COMP:16892"/>
        <dbReference type="Rhea" id="RHEA-COMP:16893"/>
        <dbReference type="Rhea" id="RHEA-COMP:16894"/>
        <dbReference type="Rhea" id="RHEA-COMP:16895"/>
        <dbReference type="ChEBI" id="CHEBI:15377"/>
        <dbReference type="ChEBI" id="CHEBI:15378"/>
        <dbReference type="ChEBI" id="CHEBI:29033"/>
        <dbReference type="ChEBI" id="CHEBI:29034"/>
        <dbReference type="ChEBI" id="CHEBI:29969"/>
        <dbReference type="ChEBI" id="CHEBI:29979"/>
        <dbReference type="ChEBI" id="CHEBI:33190"/>
        <dbReference type="ChEBI" id="CHEBI:58354"/>
        <dbReference type="ChEBI" id="CHEBI:143915"/>
        <dbReference type="ChEBI" id="CHEBI:157692"/>
    </reaction>
    <physiologicalReaction direction="left-to-right" evidence="3">
        <dbReference type="Rhea" id="RHEA:65757"/>
    </physiologicalReaction>
</comment>
<comment type="cofactor">
    <cofactor evidence="3">
        <name>Fe cation</name>
        <dbReference type="ChEBI" id="CHEBI:24875"/>
    </cofactor>
</comment>
<comment type="pathway">
    <text evidence="6">Cofactor biosynthesis; thiamine diphosphate biosynthesis.</text>
</comment>
<comment type="subunit">
    <text evidence="6">Homodimer.</text>
</comment>
<comment type="disruption phenotype">
    <text evidence="3">Growth auxotrophic for thiamine; growth partially restored by hydroxymethylpyrimidine (HMP).</text>
</comment>
<comment type="similarity">
    <text evidence="5">Belongs to the NMT1/THI5 family.</text>
</comment>
<protein>
    <recommendedName>
        <fullName evidence="4">4-amino-5-hydroxymethyl-2-methylpyrimidine phosphate synthase</fullName>
        <shortName evidence="4">HMP-P synthase</shortName>
        <shortName evidence="5">Hydroxymethylpyrimidine phosphate synthase</shortName>
        <ecNumber evidence="3">2.-.-.-</ecNumber>
    </recommendedName>
    <alternativeName>
        <fullName evidence="2">Thiamine biosynthesis protein 5</fullName>
    </alternativeName>
    <alternativeName>
        <fullName evidence="1">Thiamine pyrimidine synthase</fullName>
    </alternativeName>
</protein>
<feature type="chain" id="PRO_0000452085" description="4-amino-5-hydroxymethyl-2-methylpyrimidine phosphate synthase">
    <location>
        <begin position="1"/>
        <end position="316"/>
    </location>
</feature>
<feature type="short sequence motif" description="CCCFC; essential for catalytic activity, may be the site of iron coordination" evidence="2">
    <location>
        <begin position="191"/>
        <end position="195"/>
    </location>
</feature>
<feature type="active site" evidence="2">
    <location>
        <position position="70"/>
    </location>
</feature>
<feature type="binding site" evidence="2">
    <location>
        <begin position="118"/>
        <end position="121"/>
    </location>
    <ligand>
        <name>pyridoxal 5'-phosphate</name>
        <dbReference type="ChEBI" id="CHEBI:597326"/>
    </ligand>
</feature>
<feature type="modified residue" description="N6-(pyridoxal phosphate)lysine" evidence="2">
    <location>
        <position position="66"/>
    </location>
</feature>
<feature type="mutagenesis site" description="Decreases pyridoxal phosphate (PLP) binding." evidence="3">
    <original>H</original>
    <variation>A</variation>
    <location>
        <position position="70"/>
    </location>
</feature>
<feature type="mutagenesis site" description="Decreases catalytic activity." evidence="3">
    <original>G</original>
    <variation>A</variation>
    <location>
        <position position="118"/>
    </location>
</feature>
<feature type="mutagenesis site" description="Decreases catalytic activity." evidence="3">
    <original>E</original>
    <variation>A</variation>
    <location>
        <position position="119"/>
    </location>
</feature>
<feature type="mutagenesis site" description="Decreases catalytic activity." evidence="3">
    <original>F</original>
    <variation>A</variation>
    <location>
        <position position="120"/>
    </location>
</feature>
<name>THI5_LEGPH</name>
<proteinExistence type="evidence at protein level"/>
<keyword id="KW-0408">Iron</keyword>
<keyword id="KW-0479">Metal-binding</keyword>
<keyword id="KW-0663">Pyridoxal phosphate</keyword>
<keyword id="KW-1185">Reference proteome</keyword>
<keyword id="KW-0784">Thiamine biosynthesis</keyword>
<keyword id="KW-0808">Transferase</keyword>
<gene>
    <name evidence="4" type="primary">thi5</name>
    <name evidence="7" type="synonym">nmt1</name>
    <name evidence="7" type="synonym">thi3</name>
    <name evidence="7" type="ordered locus">lpg1565</name>
</gene>
<reference evidence="8" key="1">
    <citation type="journal article" date="2004" name="Science">
        <title>The genomic sequence of the accidental pathogen Legionella pneumophila.</title>
        <authorList>
            <person name="Chien M."/>
            <person name="Morozova I."/>
            <person name="Shi S."/>
            <person name="Sheng H."/>
            <person name="Chen J."/>
            <person name="Gomez S.M."/>
            <person name="Asamani G."/>
            <person name="Hill K."/>
            <person name="Nuara J."/>
            <person name="Feder M."/>
            <person name="Rineer J."/>
            <person name="Greenberg J.J."/>
            <person name="Steshenko V."/>
            <person name="Park S.H."/>
            <person name="Zhao B."/>
            <person name="Teplitskaya E."/>
            <person name="Edwards J.R."/>
            <person name="Pampou S."/>
            <person name="Georghiou A."/>
            <person name="Chou I.-C."/>
            <person name="Iannuccilli W."/>
            <person name="Ulz M.E."/>
            <person name="Kim D.H."/>
            <person name="Geringer-Sameth A."/>
            <person name="Goldsberry C."/>
            <person name="Morozov P."/>
            <person name="Fischer S.G."/>
            <person name="Segal G."/>
            <person name="Qu X."/>
            <person name="Rzhetsky A."/>
            <person name="Zhang P."/>
            <person name="Cayanis E."/>
            <person name="De Jong P.J."/>
            <person name="Ju J."/>
            <person name="Kalachikov S."/>
            <person name="Shuman H.A."/>
            <person name="Russo J.J."/>
        </authorList>
    </citation>
    <scope>NUCLEOTIDE SEQUENCE [LARGE SCALE GENOMIC DNA]</scope>
    <source>
        <strain evidence="8">Philadelphia 1 / ATCC 33152 / DSM 7513</strain>
    </source>
</reference>
<reference evidence="5" key="2">
    <citation type="journal article" date="2021" name="Mol. Microbiol.">
        <title>Functional characterization of the HMP-P synthase of Legionella pneumophila (Lpg1565).</title>
        <authorList>
            <person name="Paxhia M.D."/>
            <person name="Swanson M.S."/>
            <person name="Downs D.M."/>
        </authorList>
    </citation>
    <scope>FUNCTION</scope>
    <scope>CATALYTIC ACTIVITY</scope>
    <scope>COFACTOR</scope>
    <scope>PATHWAY</scope>
    <scope>SUBUNIT</scope>
    <scope>DISRUPTION PHENOTYPE</scope>
    <scope>MUTAGENESIS OF HIS-70; GLY-118; GLU-119 AND PHE-120</scope>
</reference>
<dbReference type="EC" id="2.-.-.-" evidence="3"/>
<dbReference type="EMBL" id="AE017354">
    <property type="protein sequence ID" value="AAU27647.1"/>
    <property type="molecule type" value="Genomic_DNA"/>
</dbReference>
<dbReference type="RefSeq" id="YP_095594.1">
    <property type="nucleotide sequence ID" value="NC_002942.5"/>
</dbReference>
<dbReference type="SMR" id="Q5ZV75"/>
<dbReference type="STRING" id="272624.lpg1565"/>
<dbReference type="PaxDb" id="272624-lpg1565"/>
<dbReference type="KEGG" id="lpn:lpg1565"/>
<dbReference type="PATRIC" id="fig|272624.6.peg.1639"/>
<dbReference type="eggNOG" id="COG0715">
    <property type="taxonomic scope" value="Bacteria"/>
</dbReference>
<dbReference type="HOGENOM" id="CLU_028871_6_3_6"/>
<dbReference type="OrthoDB" id="5348911at2"/>
<dbReference type="UniPathway" id="UPA00060"/>
<dbReference type="Proteomes" id="UP000000609">
    <property type="component" value="Chromosome"/>
</dbReference>
<dbReference type="GO" id="GO:0106344">
    <property type="term" value="F:4-amino-5-hydroxymethyl-2-methylpyrimidine phosphate synthase activity from histidine and PLP"/>
    <property type="evidence" value="ECO:0000315"/>
    <property type="project" value="UniProtKB"/>
</dbReference>
<dbReference type="GO" id="GO:0046872">
    <property type="term" value="F:metal ion binding"/>
    <property type="evidence" value="ECO:0007669"/>
    <property type="project" value="UniProtKB-KW"/>
</dbReference>
<dbReference type="GO" id="GO:0070279">
    <property type="term" value="F:vitamin B6 binding"/>
    <property type="evidence" value="ECO:0000314"/>
    <property type="project" value="UniProtKB"/>
</dbReference>
<dbReference type="GO" id="GO:0009228">
    <property type="term" value="P:thiamine biosynthetic process"/>
    <property type="evidence" value="ECO:0000315"/>
    <property type="project" value="UniProtKB"/>
</dbReference>
<dbReference type="GO" id="GO:0009229">
    <property type="term" value="P:thiamine diphosphate biosynthetic process"/>
    <property type="evidence" value="ECO:0007669"/>
    <property type="project" value="UniProtKB-UniPathway"/>
</dbReference>
<dbReference type="Gene3D" id="3.40.190.10">
    <property type="entry name" value="Periplasmic binding protein-like II"/>
    <property type="match status" value="2"/>
</dbReference>
<dbReference type="InterPro" id="IPR027939">
    <property type="entry name" value="NMT1/THI5"/>
</dbReference>
<dbReference type="InterPro" id="IPR015168">
    <property type="entry name" value="SsuA/THI5"/>
</dbReference>
<dbReference type="PANTHER" id="PTHR31528">
    <property type="entry name" value="4-AMINO-5-HYDROXYMETHYL-2-METHYLPYRIMIDINE PHOSPHATE SYNTHASE THI11-RELATED"/>
    <property type="match status" value="1"/>
</dbReference>
<dbReference type="PANTHER" id="PTHR31528:SF1">
    <property type="entry name" value="4-AMINO-5-HYDROXYMETHYL-2-METHYLPYRIMIDINE PHOSPHATE SYNTHASE THI11-RELATED"/>
    <property type="match status" value="1"/>
</dbReference>
<dbReference type="Pfam" id="PF09084">
    <property type="entry name" value="NMT1"/>
    <property type="match status" value="1"/>
</dbReference>
<dbReference type="SUPFAM" id="SSF53850">
    <property type="entry name" value="Periplasmic binding protein-like II"/>
    <property type="match status" value="1"/>
</dbReference>
<organism evidence="8">
    <name type="scientific">Legionella pneumophila subsp. pneumophila (strain Philadelphia 1 / ATCC 33152 / DSM 7513)</name>
    <dbReference type="NCBI Taxonomy" id="272624"/>
    <lineage>
        <taxon>Bacteria</taxon>
        <taxon>Pseudomonadati</taxon>
        <taxon>Pseudomonadota</taxon>
        <taxon>Gammaproteobacteria</taxon>
        <taxon>Legionellales</taxon>
        <taxon>Legionellaceae</taxon>
        <taxon>Legionella</taxon>
    </lineage>
</organism>